<evidence type="ECO:0000269" key="1">
    <source>
    </source>
</evidence>
<evidence type="ECO:0000303" key="2">
    <source>
    </source>
</evidence>
<evidence type="ECO:0000305" key="3"/>
<evidence type="ECO:0000305" key="4">
    <source>
    </source>
</evidence>
<sequence length="21" mass="1956">GMASKAGSIVGKIAKIALGAL</sequence>
<protein>
    <recommendedName>
        <fullName evidence="2">Peptide PGLa-B2</fullName>
    </recommendedName>
</protein>
<accession>C0HK87</accession>
<name>PGLB2_XENBO</name>
<feature type="peptide" id="PRO_0000438427" description="Peptide PGLa-B2" evidence="1">
    <location>
        <begin position="1"/>
        <end position="21"/>
    </location>
</feature>
<feature type="modified residue" description="Leucine amide" evidence="1">
    <location>
        <position position="21"/>
    </location>
</feature>
<dbReference type="GO" id="GO:0005576">
    <property type="term" value="C:extracellular region"/>
    <property type="evidence" value="ECO:0007669"/>
    <property type="project" value="UniProtKB-SubCell"/>
</dbReference>
<dbReference type="GO" id="GO:0042742">
    <property type="term" value="P:defense response to bacterium"/>
    <property type="evidence" value="ECO:0007669"/>
    <property type="project" value="UniProtKB-KW"/>
</dbReference>
<dbReference type="GO" id="GO:0050832">
    <property type="term" value="P:defense response to fungus"/>
    <property type="evidence" value="ECO:0007669"/>
    <property type="project" value="UniProtKB-KW"/>
</dbReference>
<dbReference type="GO" id="GO:0031640">
    <property type="term" value="P:killing of cells of another organism"/>
    <property type="evidence" value="ECO:0007669"/>
    <property type="project" value="UniProtKB-KW"/>
</dbReference>
<comment type="function">
    <text evidence="1">Has antimicrobial activity against Gram-negative bacterium E.coli ATCC 25922 (MIC=25 uM), Gram-positive bacterium S.auerus ATCC 25923 (MIC=50 uM) and against fungus C.albicans ATCC 90028 (MIC=25 uM). Has some hemolytic activity against human erythrocytes at high concentration.</text>
</comment>
<comment type="subcellular location">
    <subcellularLocation>
        <location evidence="1">Secreted</location>
    </subcellularLocation>
</comment>
<comment type="tissue specificity">
    <text evidence="4">Expressed by the skin glands.</text>
</comment>
<comment type="mass spectrometry" mass="1955.2" method="MALDI" evidence="1"/>
<comment type="similarity">
    <text evidence="3">Belongs to the gastrin/cholecystokinin family. Magainin subfamily.</text>
</comment>
<proteinExistence type="evidence at protein level"/>
<keyword id="KW-0027">Amidation</keyword>
<keyword id="KW-0044">Antibiotic</keyword>
<keyword id="KW-0929">Antimicrobial</keyword>
<keyword id="KW-0204">Cytolysis</keyword>
<keyword id="KW-0903">Direct protein sequencing</keyword>
<keyword id="KW-0295">Fungicide</keyword>
<keyword id="KW-0354">Hemolysis</keyword>
<keyword id="KW-0964">Secreted</keyword>
<reference evidence="3" key="1">
    <citation type="journal article" date="2010" name="Comp. Biochem. Physiol.">
        <title>Antimicrobial peptides with therapeutic potential from skin secretions of the Marsabit clawed frog Xenopus borealis (Pipidae).</title>
        <authorList>
            <person name="Mechkarska M."/>
            <person name="Ahmed E."/>
            <person name="Coquet L."/>
            <person name="Leprince J."/>
            <person name="Jouenne T."/>
            <person name="Vaudry H."/>
            <person name="King J.D."/>
            <person name="Conlon J.M."/>
        </authorList>
    </citation>
    <scope>PROTEIN SEQUENCE</scope>
    <scope>FUNCTION</scope>
    <scope>SUBCELLULAR LOCATION</scope>
    <scope>MASS SPECTROMETRY</scope>
    <scope>AMIDATION AT LEU-21</scope>
    <source>
        <tissue evidence="2">Skin secretion</tissue>
    </source>
</reference>
<organism evidence="2">
    <name type="scientific">Xenopus borealis</name>
    <name type="common">Kenyan clawed frog</name>
    <dbReference type="NCBI Taxonomy" id="8354"/>
    <lineage>
        <taxon>Eukaryota</taxon>
        <taxon>Metazoa</taxon>
        <taxon>Chordata</taxon>
        <taxon>Craniata</taxon>
        <taxon>Vertebrata</taxon>
        <taxon>Euteleostomi</taxon>
        <taxon>Amphibia</taxon>
        <taxon>Batrachia</taxon>
        <taxon>Anura</taxon>
        <taxon>Pipoidea</taxon>
        <taxon>Pipidae</taxon>
        <taxon>Xenopodinae</taxon>
        <taxon>Xenopus</taxon>
        <taxon>Xenopus</taxon>
    </lineage>
</organism>